<keyword id="KW-0067">ATP-binding</keyword>
<keyword id="KW-1003">Cell membrane</keyword>
<keyword id="KW-0472">Membrane</keyword>
<keyword id="KW-0547">Nucleotide-binding</keyword>
<keyword id="KW-1185">Reference proteome</keyword>
<keyword id="KW-1278">Translocase</keyword>
<keyword id="KW-0813">Transport</keyword>
<organism>
    <name type="scientific">Bacillus anthracis</name>
    <dbReference type="NCBI Taxonomy" id="1392"/>
    <lineage>
        <taxon>Bacteria</taxon>
        <taxon>Bacillati</taxon>
        <taxon>Bacillota</taxon>
        <taxon>Bacilli</taxon>
        <taxon>Bacillales</taxon>
        <taxon>Bacillaceae</taxon>
        <taxon>Bacillus</taxon>
        <taxon>Bacillus cereus group</taxon>
    </lineage>
</organism>
<proteinExistence type="inferred from homology"/>
<reference key="1">
    <citation type="journal article" date="2003" name="Nature">
        <title>The genome sequence of Bacillus anthracis Ames and comparison to closely related bacteria.</title>
        <authorList>
            <person name="Read T.D."/>
            <person name="Peterson S.N."/>
            <person name="Tourasse N.J."/>
            <person name="Baillie L.W."/>
            <person name="Paulsen I.T."/>
            <person name="Nelson K.E."/>
            <person name="Tettelin H."/>
            <person name="Fouts D.E."/>
            <person name="Eisen J.A."/>
            <person name="Gill S.R."/>
            <person name="Holtzapple E.K."/>
            <person name="Okstad O.A."/>
            <person name="Helgason E."/>
            <person name="Rilstone J."/>
            <person name="Wu M."/>
            <person name="Kolonay J.F."/>
            <person name="Beanan M.J."/>
            <person name="Dodson R.J."/>
            <person name="Brinkac L.M."/>
            <person name="Gwinn M.L."/>
            <person name="DeBoy R.T."/>
            <person name="Madpu R."/>
            <person name="Daugherty S.C."/>
            <person name="Durkin A.S."/>
            <person name="Haft D.H."/>
            <person name="Nelson W.C."/>
            <person name="Peterson J.D."/>
            <person name="Pop M."/>
            <person name="Khouri H.M."/>
            <person name="Radune D."/>
            <person name="Benton J.L."/>
            <person name="Mahamoud Y."/>
            <person name="Jiang L."/>
            <person name="Hance I.R."/>
            <person name="Weidman J.F."/>
            <person name="Berry K.J."/>
            <person name="Plaut R.D."/>
            <person name="Wolf A.M."/>
            <person name="Watkins K.L."/>
            <person name="Nierman W.C."/>
            <person name="Hazen A."/>
            <person name="Cline R.T."/>
            <person name="Redmond C."/>
            <person name="Thwaite J.E."/>
            <person name="White O."/>
            <person name="Salzberg S.L."/>
            <person name="Thomason B."/>
            <person name="Friedlander A.M."/>
            <person name="Koehler T.M."/>
            <person name="Hanna P.C."/>
            <person name="Kolstoe A.-B."/>
            <person name="Fraser C.M."/>
        </authorList>
    </citation>
    <scope>NUCLEOTIDE SEQUENCE [LARGE SCALE GENOMIC DNA]</scope>
    <source>
        <strain>Ames / isolate Porton</strain>
    </source>
</reference>
<reference key="2">
    <citation type="journal article" date="2009" name="J. Bacteriol.">
        <title>The complete genome sequence of Bacillus anthracis Ames 'Ancestor'.</title>
        <authorList>
            <person name="Ravel J."/>
            <person name="Jiang L."/>
            <person name="Stanley S.T."/>
            <person name="Wilson M.R."/>
            <person name="Decker R.S."/>
            <person name="Read T.D."/>
            <person name="Worsham P."/>
            <person name="Keim P.S."/>
            <person name="Salzberg S.L."/>
            <person name="Fraser-Liggett C.M."/>
            <person name="Rasko D.A."/>
        </authorList>
    </citation>
    <scope>NUCLEOTIDE SEQUENCE [LARGE SCALE GENOMIC DNA]</scope>
    <source>
        <strain>Ames ancestor</strain>
    </source>
</reference>
<reference key="3">
    <citation type="submission" date="2004-01" db="EMBL/GenBank/DDBJ databases">
        <title>Complete genome sequence of Bacillus anthracis Sterne.</title>
        <authorList>
            <person name="Brettin T.S."/>
            <person name="Bruce D."/>
            <person name="Challacombe J.F."/>
            <person name="Gilna P."/>
            <person name="Han C."/>
            <person name="Hill K."/>
            <person name="Hitchcock P."/>
            <person name="Jackson P."/>
            <person name="Keim P."/>
            <person name="Longmire J."/>
            <person name="Lucas S."/>
            <person name="Okinaka R."/>
            <person name="Richardson P."/>
            <person name="Rubin E."/>
            <person name="Tice H."/>
        </authorList>
    </citation>
    <scope>NUCLEOTIDE SEQUENCE [LARGE SCALE GENOMIC DNA]</scope>
    <source>
        <strain>Sterne</strain>
    </source>
</reference>
<evidence type="ECO:0000255" key="1">
    <source>
        <dbReference type="HAMAP-Rule" id="MF_01710"/>
    </source>
</evidence>
<dbReference type="EC" id="7.-.-.-" evidence="1"/>
<dbReference type="EMBL" id="AE016879">
    <property type="protein sequence ID" value="AAP24194.1"/>
    <property type="molecule type" value="Genomic_DNA"/>
</dbReference>
<dbReference type="EMBL" id="AE017334">
    <property type="protein sequence ID" value="AAT29220.1"/>
    <property type="molecule type" value="Genomic_DNA"/>
</dbReference>
<dbReference type="EMBL" id="AE017225">
    <property type="protein sequence ID" value="AAT52477.1"/>
    <property type="molecule type" value="Genomic_DNA"/>
</dbReference>
<dbReference type="RefSeq" id="NP_842708.1">
    <property type="nucleotide sequence ID" value="NC_003997.3"/>
</dbReference>
<dbReference type="RefSeq" id="WP_000406513.1">
    <property type="nucleotide sequence ID" value="NZ_WXXJ01000051.1"/>
</dbReference>
<dbReference type="RefSeq" id="YP_026426.1">
    <property type="nucleotide sequence ID" value="NC_005945.1"/>
</dbReference>
<dbReference type="SMR" id="Q81VQ1"/>
<dbReference type="STRING" id="261594.GBAA_0140"/>
<dbReference type="DNASU" id="1087290"/>
<dbReference type="GeneID" id="45020185"/>
<dbReference type="KEGG" id="ban:BA_0140"/>
<dbReference type="KEGG" id="banh:HYU01_00755"/>
<dbReference type="KEGG" id="bar:GBAA_0140"/>
<dbReference type="KEGG" id="bat:BAS0140"/>
<dbReference type="PATRIC" id="fig|198094.11.peg.137"/>
<dbReference type="eggNOG" id="COG1122">
    <property type="taxonomic scope" value="Bacteria"/>
</dbReference>
<dbReference type="HOGENOM" id="CLU_000604_1_22_9"/>
<dbReference type="OMA" id="MIMYDEP"/>
<dbReference type="OrthoDB" id="9784332at2"/>
<dbReference type="Proteomes" id="UP000000427">
    <property type="component" value="Chromosome"/>
</dbReference>
<dbReference type="Proteomes" id="UP000000594">
    <property type="component" value="Chromosome"/>
</dbReference>
<dbReference type="GO" id="GO:0043190">
    <property type="term" value="C:ATP-binding cassette (ABC) transporter complex"/>
    <property type="evidence" value="ECO:0007669"/>
    <property type="project" value="TreeGrafter"/>
</dbReference>
<dbReference type="GO" id="GO:0005524">
    <property type="term" value="F:ATP binding"/>
    <property type="evidence" value="ECO:0007669"/>
    <property type="project" value="UniProtKB-KW"/>
</dbReference>
<dbReference type="GO" id="GO:0016887">
    <property type="term" value="F:ATP hydrolysis activity"/>
    <property type="evidence" value="ECO:0007669"/>
    <property type="project" value="InterPro"/>
</dbReference>
<dbReference type="GO" id="GO:0042626">
    <property type="term" value="F:ATPase-coupled transmembrane transporter activity"/>
    <property type="evidence" value="ECO:0007669"/>
    <property type="project" value="TreeGrafter"/>
</dbReference>
<dbReference type="CDD" id="cd03225">
    <property type="entry name" value="ABC_cobalt_CbiO_domain1"/>
    <property type="match status" value="1"/>
</dbReference>
<dbReference type="FunFam" id="3.40.50.300:FF:000224">
    <property type="entry name" value="Energy-coupling factor transporter ATP-binding protein EcfA"/>
    <property type="match status" value="1"/>
</dbReference>
<dbReference type="Gene3D" id="3.40.50.300">
    <property type="entry name" value="P-loop containing nucleotide triphosphate hydrolases"/>
    <property type="match status" value="1"/>
</dbReference>
<dbReference type="InterPro" id="IPR003593">
    <property type="entry name" value="AAA+_ATPase"/>
</dbReference>
<dbReference type="InterPro" id="IPR003439">
    <property type="entry name" value="ABC_transporter-like_ATP-bd"/>
</dbReference>
<dbReference type="InterPro" id="IPR017871">
    <property type="entry name" value="ABC_transporter-like_CS"/>
</dbReference>
<dbReference type="InterPro" id="IPR015856">
    <property type="entry name" value="ABC_transpr_CbiO/EcfA_su"/>
</dbReference>
<dbReference type="InterPro" id="IPR050095">
    <property type="entry name" value="ECF_ABC_transporter_ATP-bd"/>
</dbReference>
<dbReference type="InterPro" id="IPR030946">
    <property type="entry name" value="EcfA2"/>
</dbReference>
<dbReference type="InterPro" id="IPR027417">
    <property type="entry name" value="P-loop_NTPase"/>
</dbReference>
<dbReference type="NCBIfam" id="TIGR04521">
    <property type="entry name" value="ECF_ATPase_2"/>
    <property type="match status" value="1"/>
</dbReference>
<dbReference type="NCBIfam" id="NF010155">
    <property type="entry name" value="PRK13634.1"/>
    <property type="match status" value="1"/>
</dbReference>
<dbReference type="PANTHER" id="PTHR43553:SF27">
    <property type="entry name" value="ENERGY-COUPLING FACTOR TRANSPORTER ATP-BINDING PROTEIN ECFA2"/>
    <property type="match status" value="1"/>
</dbReference>
<dbReference type="PANTHER" id="PTHR43553">
    <property type="entry name" value="HEAVY METAL TRANSPORTER"/>
    <property type="match status" value="1"/>
</dbReference>
<dbReference type="Pfam" id="PF00005">
    <property type="entry name" value="ABC_tran"/>
    <property type="match status" value="1"/>
</dbReference>
<dbReference type="SMART" id="SM00382">
    <property type="entry name" value="AAA"/>
    <property type="match status" value="1"/>
</dbReference>
<dbReference type="SUPFAM" id="SSF52540">
    <property type="entry name" value="P-loop containing nucleoside triphosphate hydrolases"/>
    <property type="match status" value="1"/>
</dbReference>
<dbReference type="PROSITE" id="PS00211">
    <property type="entry name" value="ABC_TRANSPORTER_1"/>
    <property type="match status" value="1"/>
</dbReference>
<dbReference type="PROSITE" id="PS50893">
    <property type="entry name" value="ABC_TRANSPORTER_2"/>
    <property type="match status" value="1"/>
</dbReference>
<dbReference type="PROSITE" id="PS51246">
    <property type="entry name" value="CBIO"/>
    <property type="match status" value="1"/>
</dbReference>
<protein>
    <recommendedName>
        <fullName evidence="1">Energy-coupling factor transporter ATP-binding protein EcfA2</fullName>
        <shortName evidence="1">ECF transporter A component EcfA2</shortName>
        <ecNumber evidence="1">7.-.-.-</ecNumber>
    </recommendedName>
</protein>
<comment type="function">
    <text evidence="1">ATP-binding (A) component of a common energy-coupling factor (ECF) ABC-transporter complex. Unlike classic ABC transporters this ECF transporter provides the energy necessary to transport a number of different substrates.</text>
</comment>
<comment type="subunit">
    <text evidence="1">Forms a stable energy-coupling factor (ECF) transporter complex composed of 2 membrane-embedded substrate-binding proteins (S component), 2 ATP-binding proteins (A component) and 2 transmembrane proteins (T component).</text>
</comment>
<comment type="subcellular location">
    <subcellularLocation>
        <location evidence="1">Cell membrane</location>
        <topology evidence="1">Peripheral membrane protein</topology>
    </subcellularLocation>
</comment>
<comment type="similarity">
    <text evidence="1">Belongs to the ABC transporter superfamily. Energy-coupling factor EcfA family.</text>
</comment>
<sequence>MEITFQKVEHRYQYKTPFERRALYDVDVSFPSGGYYAIIGHTGSGKSTMIQHLNGLLQPTNGTVQIGEHFISAGKKEKKLKPLRKKVGVVFQFPEHQLFEETVEKDICFGPTNFGVSEEAAKQKAREAIELVGLEPELLARSPFELSGGQMRRVAIAGVLAMEPEVLVLDEPTAGLDPKGQNELMEMFYKLHKEKGLTVILVTHNMEDAAKYAEQIVVMHKGTVFLQGSAEEVFSHADELEKIGVDLPMSLKYKRAIEEKFGISIPKATLSLEDLTHEVVQVLRKGGHESCSS</sequence>
<gene>
    <name evidence="1" type="primary">ecfA2</name>
    <name type="synonym">cbiO2</name>
    <name type="ordered locus">BA_0140</name>
    <name type="ordered locus">GBAA_0140</name>
    <name type="ordered locus">BAS0140</name>
</gene>
<feature type="chain" id="PRO_0000091970" description="Energy-coupling factor transporter ATP-binding protein EcfA2">
    <location>
        <begin position="1"/>
        <end position="293"/>
    </location>
</feature>
<feature type="domain" description="ABC transporter" evidence="1">
    <location>
        <begin position="3"/>
        <end position="246"/>
    </location>
</feature>
<feature type="binding site" evidence="1">
    <location>
        <begin position="40"/>
        <end position="47"/>
    </location>
    <ligand>
        <name>ATP</name>
        <dbReference type="ChEBI" id="CHEBI:30616"/>
    </ligand>
</feature>
<accession>Q81VQ1</accession>
<accession>Q6I4Q4</accession>
<accession>Q6KYF0</accession>
<name>ECFA2_BACAN</name>